<keyword id="KW-0238">DNA-binding</keyword>
<keyword id="KW-1185">Reference proteome</keyword>
<keyword id="KW-0804">Transcription</keyword>
<keyword id="KW-0805">Transcription regulation</keyword>
<dbReference type="EMBL" id="LT708304">
    <property type="protein sequence ID" value="SIU00915.1"/>
    <property type="molecule type" value="Genomic_DNA"/>
</dbReference>
<dbReference type="RefSeq" id="NP_855952.1">
    <property type="nucleotide sequence ID" value="NC_002945.3"/>
</dbReference>
<dbReference type="RefSeq" id="WP_003411696.1">
    <property type="nucleotide sequence ID" value="NC_002945.4"/>
</dbReference>
<dbReference type="SMR" id="P67668"/>
<dbReference type="KEGG" id="mbo:BQ2027_MB2303C"/>
<dbReference type="PATRIC" id="fig|233413.5.peg.2528"/>
<dbReference type="Proteomes" id="UP000001419">
    <property type="component" value="Chromosome"/>
</dbReference>
<dbReference type="GO" id="GO:0003700">
    <property type="term" value="F:DNA-binding transcription factor activity"/>
    <property type="evidence" value="ECO:0007669"/>
    <property type="project" value="InterPro"/>
</dbReference>
<dbReference type="GO" id="GO:0000976">
    <property type="term" value="F:transcription cis-regulatory region binding"/>
    <property type="evidence" value="ECO:0007669"/>
    <property type="project" value="TreeGrafter"/>
</dbReference>
<dbReference type="Gene3D" id="3.40.190.10">
    <property type="entry name" value="Periplasmic binding protein-like II"/>
    <property type="match status" value="2"/>
</dbReference>
<dbReference type="Gene3D" id="1.10.10.10">
    <property type="entry name" value="Winged helix-like DNA-binding domain superfamily/Winged helix DNA-binding domain"/>
    <property type="match status" value="1"/>
</dbReference>
<dbReference type="InterPro" id="IPR005119">
    <property type="entry name" value="LysR_subst-bd"/>
</dbReference>
<dbReference type="InterPro" id="IPR000847">
    <property type="entry name" value="Tscrpt_reg_HTH_LysR"/>
</dbReference>
<dbReference type="InterPro" id="IPR036388">
    <property type="entry name" value="WH-like_DNA-bd_sf"/>
</dbReference>
<dbReference type="InterPro" id="IPR036390">
    <property type="entry name" value="WH_DNA-bd_sf"/>
</dbReference>
<dbReference type="PANTHER" id="PTHR30126">
    <property type="entry name" value="HTH-TYPE TRANSCRIPTIONAL REGULATOR"/>
    <property type="match status" value="1"/>
</dbReference>
<dbReference type="PANTHER" id="PTHR30126:SF39">
    <property type="entry name" value="HTH-TYPE TRANSCRIPTIONAL REGULATOR CYSL"/>
    <property type="match status" value="1"/>
</dbReference>
<dbReference type="Pfam" id="PF00126">
    <property type="entry name" value="HTH_1"/>
    <property type="match status" value="1"/>
</dbReference>
<dbReference type="Pfam" id="PF03466">
    <property type="entry name" value="LysR_substrate"/>
    <property type="match status" value="1"/>
</dbReference>
<dbReference type="SUPFAM" id="SSF53850">
    <property type="entry name" value="Periplasmic binding protein-like II"/>
    <property type="match status" value="1"/>
</dbReference>
<dbReference type="SUPFAM" id="SSF46785">
    <property type="entry name" value="Winged helix' DNA-binding domain"/>
    <property type="match status" value="1"/>
</dbReference>
<dbReference type="PROSITE" id="PS50931">
    <property type="entry name" value="HTH_LYSR"/>
    <property type="match status" value="1"/>
</dbReference>
<feature type="chain" id="PRO_0000105815" description="Uncharacterized HTH-type transcriptional regulator Mb2303c">
    <location>
        <begin position="1"/>
        <end position="312"/>
    </location>
</feature>
<feature type="domain" description="HTH lysR-type" evidence="1">
    <location>
        <begin position="8"/>
        <end position="65"/>
    </location>
</feature>
<feature type="DNA-binding region" description="H-T-H motif" evidence="1">
    <location>
        <begin position="25"/>
        <end position="45"/>
    </location>
</feature>
<comment type="similarity">
    <text evidence="2">Belongs to the LysR transcriptional regulatory family.</text>
</comment>
<accession>P67668</accession>
<accession>A0A1R3Y1I7</accession>
<accession>Q50683</accession>
<accession>X2BKM0</accession>
<protein>
    <recommendedName>
        <fullName>Uncharacterized HTH-type transcriptional regulator Mb2303c</fullName>
    </recommendedName>
</protein>
<evidence type="ECO:0000255" key="1">
    <source>
        <dbReference type="PROSITE-ProRule" id="PRU00253"/>
    </source>
</evidence>
<evidence type="ECO:0000305" key="2"/>
<gene>
    <name type="ordered locus">BQ2027_MB2303C</name>
</gene>
<reference key="1">
    <citation type="journal article" date="2003" name="Proc. Natl. Acad. Sci. U.S.A.">
        <title>The complete genome sequence of Mycobacterium bovis.</title>
        <authorList>
            <person name="Garnier T."/>
            <person name="Eiglmeier K."/>
            <person name="Camus J.-C."/>
            <person name="Medina N."/>
            <person name="Mansoor H."/>
            <person name="Pryor M."/>
            <person name="Duthoy S."/>
            <person name="Grondin S."/>
            <person name="Lacroix C."/>
            <person name="Monsempe C."/>
            <person name="Simon S."/>
            <person name="Harris B."/>
            <person name="Atkin R."/>
            <person name="Doggett J."/>
            <person name="Mayes R."/>
            <person name="Keating L."/>
            <person name="Wheeler P.R."/>
            <person name="Parkhill J."/>
            <person name="Barrell B.G."/>
            <person name="Cole S.T."/>
            <person name="Gordon S.V."/>
            <person name="Hewinson R.G."/>
        </authorList>
    </citation>
    <scope>NUCLEOTIDE SEQUENCE [LARGE SCALE GENOMIC DNA]</scope>
    <source>
        <strain>ATCC BAA-935 / AF2122/97</strain>
    </source>
</reference>
<reference key="2">
    <citation type="journal article" date="2017" name="Genome Announc.">
        <title>Updated reference genome sequence and annotation of Mycobacterium bovis AF2122/97.</title>
        <authorList>
            <person name="Malone K.M."/>
            <person name="Farrell D."/>
            <person name="Stuber T.P."/>
            <person name="Schubert O.T."/>
            <person name="Aebersold R."/>
            <person name="Robbe-Austerman S."/>
            <person name="Gordon S.V."/>
        </authorList>
    </citation>
    <scope>NUCLEOTIDE SEQUENCE [LARGE SCALE GENOMIC DNA]</scope>
    <scope>GENOME REANNOTATION</scope>
    <source>
        <strain>ATCC BAA-935 / AF2122/97</strain>
    </source>
</reference>
<name>Y2303_MYCBO</name>
<sequence>MPLSSRMPGLTCFEIFLAIAEAGSLGGAARELGLTQQAVSRRLASMEAQIGVRLAIRTTRGSQLTPAGIVVAEWAARLLEVADEIDAGLGSLRTEGRQRIRVVASQTIAEQLMPHWMLSLRAADMRRGGTVPEVILTATNSEHAIAAVRDGIADLGFIENPCPPTGLGSVVVARDELVVVVPPGHKWARRSRVVSARELAQTPLVTREPNSGIRDSLTAALRDTLGEDMQQAPPVLELSSAAAVRAAVLAGAGPAAMSRLAIADDLAFGRLLAVDIPALNLRRQLRAIWVGGRTPPAGAIRDLLSHITSRST</sequence>
<organism>
    <name type="scientific">Mycobacterium bovis (strain ATCC BAA-935 / AF2122/97)</name>
    <dbReference type="NCBI Taxonomy" id="233413"/>
    <lineage>
        <taxon>Bacteria</taxon>
        <taxon>Bacillati</taxon>
        <taxon>Actinomycetota</taxon>
        <taxon>Actinomycetes</taxon>
        <taxon>Mycobacteriales</taxon>
        <taxon>Mycobacteriaceae</taxon>
        <taxon>Mycobacterium</taxon>
        <taxon>Mycobacterium tuberculosis complex</taxon>
    </lineage>
</organism>
<proteinExistence type="inferred from homology"/>